<gene>
    <name type="ordered locus">BMA10229_A0708</name>
</gene>
<comment type="similarity">
    <text evidence="1">Belongs to the UPF0246 family.</text>
</comment>
<reference key="1">
    <citation type="journal article" date="2010" name="Genome Biol. Evol.">
        <title>Continuing evolution of Burkholderia mallei through genome reduction and large-scale rearrangements.</title>
        <authorList>
            <person name="Losada L."/>
            <person name="Ronning C.M."/>
            <person name="DeShazer D."/>
            <person name="Woods D."/>
            <person name="Fedorova N."/>
            <person name="Kim H.S."/>
            <person name="Shabalina S.A."/>
            <person name="Pearson T.R."/>
            <person name="Brinkac L."/>
            <person name="Tan P."/>
            <person name="Nandi T."/>
            <person name="Crabtree J."/>
            <person name="Badger J."/>
            <person name="Beckstrom-Sternberg S."/>
            <person name="Saqib M."/>
            <person name="Schutzer S.E."/>
            <person name="Keim P."/>
            <person name="Nierman W.C."/>
        </authorList>
    </citation>
    <scope>NUCLEOTIDE SEQUENCE [LARGE SCALE GENOMIC DNA]</scope>
    <source>
        <strain>NCTC 10229</strain>
    </source>
</reference>
<feature type="chain" id="PRO_1000061590" description="UPF0246 protein BMA10229_A0708">
    <location>
        <begin position="1"/>
        <end position="260"/>
    </location>
</feature>
<proteinExistence type="inferred from homology"/>
<evidence type="ECO:0000255" key="1">
    <source>
        <dbReference type="HAMAP-Rule" id="MF_00652"/>
    </source>
</evidence>
<organism>
    <name type="scientific">Burkholderia mallei (strain NCTC 10229)</name>
    <dbReference type="NCBI Taxonomy" id="412022"/>
    <lineage>
        <taxon>Bacteria</taxon>
        <taxon>Pseudomonadati</taxon>
        <taxon>Pseudomonadota</taxon>
        <taxon>Betaproteobacteria</taxon>
        <taxon>Burkholderiales</taxon>
        <taxon>Burkholderiaceae</taxon>
        <taxon>Burkholderia</taxon>
        <taxon>pseudomallei group</taxon>
    </lineage>
</organism>
<protein>
    <recommendedName>
        <fullName evidence="1">UPF0246 protein BMA10229_A0708</fullName>
    </recommendedName>
</protein>
<accession>A2S430</accession>
<dbReference type="EMBL" id="CP000546">
    <property type="protein sequence ID" value="ABN03240.1"/>
    <property type="molecule type" value="Genomic_DNA"/>
</dbReference>
<dbReference type="SMR" id="A2S430"/>
<dbReference type="KEGG" id="bml:BMA10229_A0708"/>
<dbReference type="HOGENOM" id="CLU_061989_0_0_4"/>
<dbReference type="Proteomes" id="UP000002283">
    <property type="component" value="Chromosome I"/>
</dbReference>
<dbReference type="GO" id="GO:0005829">
    <property type="term" value="C:cytosol"/>
    <property type="evidence" value="ECO:0007669"/>
    <property type="project" value="TreeGrafter"/>
</dbReference>
<dbReference type="GO" id="GO:0033194">
    <property type="term" value="P:response to hydroperoxide"/>
    <property type="evidence" value="ECO:0007669"/>
    <property type="project" value="TreeGrafter"/>
</dbReference>
<dbReference type="HAMAP" id="MF_00652">
    <property type="entry name" value="UPF0246"/>
    <property type="match status" value="1"/>
</dbReference>
<dbReference type="InterPro" id="IPR005583">
    <property type="entry name" value="YaaA"/>
</dbReference>
<dbReference type="NCBIfam" id="NF002541">
    <property type="entry name" value="PRK02101.1-1"/>
    <property type="match status" value="1"/>
</dbReference>
<dbReference type="NCBIfam" id="NF002542">
    <property type="entry name" value="PRK02101.1-3"/>
    <property type="match status" value="1"/>
</dbReference>
<dbReference type="PANTHER" id="PTHR30283:SF4">
    <property type="entry name" value="PEROXIDE STRESS RESISTANCE PROTEIN YAAA"/>
    <property type="match status" value="1"/>
</dbReference>
<dbReference type="PANTHER" id="PTHR30283">
    <property type="entry name" value="PEROXIDE STRESS RESPONSE PROTEIN YAAA"/>
    <property type="match status" value="1"/>
</dbReference>
<dbReference type="Pfam" id="PF03883">
    <property type="entry name" value="H2O2_YaaD"/>
    <property type="match status" value="1"/>
</dbReference>
<name>Y3008_BURM9</name>
<sequence>MIIVLSPAKSLDYETPPHVSHHTQPQFADDAAALIDELRRLSPQQIATLMSISDPLARLNFQRYADWSRASTPANAKQAVLAFNGDVYEGLDARSLSPDDLDYAQRHVRVLSGLYGLLRPLDLLQPYRLEMGTRFSNARGKDLYAFWGERITHALNAELKTRVGASRVLVNCASAEYFKSVKPKLLDARVVTPVFEDWKDGRYKIISFHAKRARGLMARYVVEGRIDSPDALKDFASEGYAFDASASNDDTYVFRRRAGA</sequence>